<dbReference type="EC" id="2.4.2.17"/>
<dbReference type="EMBL" id="CP001389">
    <property type="protein sequence ID" value="ACP24199.1"/>
    <property type="molecule type" value="Genomic_DNA"/>
</dbReference>
<dbReference type="RefSeq" id="WP_012706984.1">
    <property type="nucleotide sequence ID" value="NC_012587.1"/>
</dbReference>
<dbReference type="RefSeq" id="YP_002824952.1">
    <property type="nucleotide sequence ID" value="NC_012587.1"/>
</dbReference>
<dbReference type="SMR" id="C3MGT4"/>
<dbReference type="STRING" id="394.NGR_c04030"/>
<dbReference type="KEGG" id="rhi:NGR_c04030"/>
<dbReference type="PATRIC" id="fig|394.7.peg.3209"/>
<dbReference type="eggNOG" id="COG0040">
    <property type="taxonomic scope" value="Bacteria"/>
</dbReference>
<dbReference type="HOGENOM" id="CLU_038115_0_1_5"/>
<dbReference type="OrthoDB" id="9806435at2"/>
<dbReference type="UniPathway" id="UPA00031">
    <property type="reaction ID" value="UER00006"/>
</dbReference>
<dbReference type="Proteomes" id="UP000001054">
    <property type="component" value="Chromosome"/>
</dbReference>
<dbReference type="GO" id="GO:0005737">
    <property type="term" value="C:cytoplasm"/>
    <property type="evidence" value="ECO:0007669"/>
    <property type="project" value="UniProtKB-SubCell"/>
</dbReference>
<dbReference type="GO" id="GO:0005524">
    <property type="term" value="F:ATP binding"/>
    <property type="evidence" value="ECO:0007669"/>
    <property type="project" value="UniProtKB-KW"/>
</dbReference>
<dbReference type="GO" id="GO:0003879">
    <property type="term" value="F:ATP phosphoribosyltransferase activity"/>
    <property type="evidence" value="ECO:0007669"/>
    <property type="project" value="UniProtKB-EC"/>
</dbReference>
<dbReference type="GO" id="GO:0000105">
    <property type="term" value="P:L-histidine biosynthetic process"/>
    <property type="evidence" value="ECO:0007669"/>
    <property type="project" value="UniProtKB-UniPathway"/>
</dbReference>
<dbReference type="CDD" id="cd13593">
    <property type="entry name" value="PBP2_HisGL3"/>
    <property type="match status" value="1"/>
</dbReference>
<dbReference type="Gene3D" id="3.40.190.10">
    <property type="entry name" value="Periplasmic binding protein-like II"/>
    <property type="match status" value="2"/>
</dbReference>
<dbReference type="InterPro" id="IPR013820">
    <property type="entry name" value="ATP_PRibTrfase_cat"/>
</dbReference>
<dbReference type="InterPro" id="IPR018198">
    <property type="entry name" value="ATP_PRibTrfase_CS"/>
</dbReference>
<dbReference type="InterPro" id="IPR001348">
    <property type="entry name" value="ATP_PRibTrfase_HisG"/>
</dbReference>
<dbReference type="NCBIfam" id="TIGR00070">
    <property type="entry name" value="hisG"/>
    <property type="match status" value="1"/>
</dbReference>
<dbReference type="PANTHER" id="PTHR21403:SF8">
    <property type="entry name" value="ATP PHOSPHORIBOSYLTRANSFERASE"/>
    <property type="match status" value="1"/>
</dbReference>
<dbReference type="PANTHER" id="PTHR21403">
    <property type="entry name" value="ATP PHOSPHORIBOSYLTRANSFERASE ATP-PRTASE"/>
    <property type="match status" value="1"/>
</dbReference>
<dbReference type="Pfam" id="PF01634">
    <property type="entry name" value="HisG"/>
    <property type="match status" value="1"/>
</dbReference>
<dbReference type="SUPFAM" id="SSF53850">
    <property type="entry name" value="Periplasmic binding protein-like II"/>
    <property type="match status" value="1"/>
</dbReference>
<dbReference type="PROSITE" id="PS01316">
    <property type="entry name" value="ATP_P_PHORIBOSYLTR"/>
    <property type="match status" value="1"/>
</dbReference>
<name>HIS1_SINFN</name>
<evidence type="ECO:0000250" key="1"/>
<evidence type="ECO:0000305" key="2"/>
<accession>C3MGT4</accession>
<feature type="chain" id="PRO_1000213276" description="ATP phosphoribosyltransferase">
    <location>
        <begin position="1"/>
        <end position="231"/>
    </location>
</feature>
<proteinExistence type="inferred from homology"/>
<sequence length="231" mass="24896">MTITIALPSKGRMKDDASAIFERAGMKIVAVGNDRSYRGRVEGWDDVEVAFLSASEISREVGSGAVDFGVTGEDLVREGIADVDARVEFAARLGFGHADVVVAVPEVWYDVDTMADLGDVAADFRARHGRRLAIATKYWRLTQQFFSGSHGIQLYRIVESLGATEGAPASGSADIIVDITSTGSTLKANHLKILSDGVILRSEACLVRARKPAHDGYPMIDRIISSVRSVL</sequence>
<keyword id="KW-0028">Amino-acid biosynthesis</keyword>
<keyword id="KW-0067">ATP-binding</keyword>
<keyword id="KW-0963">Cytoplasm</keyword>
<keyword id="KW-0328">Glycosyltransferase</keyword>
<keyword id="KW-0368">Histidine biosynthesis</keyword>
<keyword id="KW-0547">Nucleotide-binding</keyword>
<keyword id="KW-1185">Reference proteome</keyword>
<keyword id="KW-0808">Transferase</keyword>
<organism>
    <name type="scientific">Sinorhizobium fredii (strain NBRC 101917 / NGR234)</name>
    <dbReference type="NCBI Taxonomy" id="394"/>
    <lineage>
        <taxon>Bacteria</taxon>
        <taxon>Pseudomonadati</taxon>
        <taxon>Pseudomonadota</taxon>
        <taxon>Alphaproteobacteria</taxon>
        <taxon>Hyphomicrobiales</taxon>
        <taxon>Rhizobiaceae</taxon>
        <taxon>Sinorhizobium/Ensifer group</taxon>
        <taxon>Sinorhizobium</taxon>
    </lineage>
</organism>
<protein>
    <recommendedName>
        <fullName>ATP phosphoribosyltransferase</fullName>
        <shortName>ATP-PRT</shortName>
        <shortName>ATP-PRTase</shortName>
        <ecNumber>2.4.2.17</ecNumber>
    </recommendedName>
</protein>
<comment type="function">
    <text evidence="1">Catalyzes the condensation of ATP and 5-phosphoribose 1-diphosphate to form N'-(5'-phosphoribosyl)-ATP (PR-ATP). Has a crucial role in the pathway because the rate of histidine biosynthesis seems to be controlled primarily by regulation of HisG enzymatic activity (By similarity).</text>
</comment>
<comment type="catalytic activity">
    <reaction>
        <text>1-(5-phospho-beta-D-ribosyl)-ATP + diphosphate = 5-phospho-alpha-D-ribose 1-diphosphate + ATP</text>
        <dbReference type="Rhea" id="RHEA:18473"/>
        <dbReference type="ChEBI" id="CHEBI:30616"/>
        <dbReference type="ChEBI" id="CHEBI:33019"/>
        <dbReference type="ChEBI" id="CHEBI:58017"/>
        <dbReference type="ChEBI" id="CHEBI:73183"/>
        <dbReference type="EC" id="2.4.2.17"/>
    </reaction>
</comment>
<comment type="pathway">
    <text>Amino-acid biosynthesis; L-histidine biosynthesis; L-histidine from 5-phospho-alpha-D-ribose 1-diphosphate: step 1/9.</text>
</comment>
<comment type="subunit">
    <text evidence="1">Heteromultimer composed of HisG and HisZ subunits.</text>
</comment>
<comment type="subcellular location">
    <subcellularLocation>
        <location evidence="1">Cytoplasm</location>
    </subcellularLocation>
</comment>
<comment type="domain">
    <text>Lacks the C-terminal regulatory region which is replaced by HisZ.</text>
</comment>
<comment type="similarity">
    <text evidence="2">Belongs to the ATP phosphoribosyltransferase family. Short subfamily.</text>
</comment>
<gene>
    <name type="primary">hisG</name>
    <name type="ordered locus">NGR_c04030</name>
</gene>
<reference key="1">
    <citation type="journal article" date="2009" name="Appl. Environ. Microbiol.">
        <title>Rhizobium sp. strain NGR234 possesses a remarkable number of secretion systems.</title>
        <authorList>
            <person name="Schmeisser C."/>
            <person name="Liesegang H."/>
            <person name="Krysciak D."/>
            <person name="Bakkou N."/>
            <person name="Le Quere A."/>
            <person name="Wollherr A."/>
            <person name="Heinemeyer I."/>
            <person name="Morgenstern B."/>
            <person name="Pommerening-Roeser A."/>
            <person name="Flores M."/>
            <person name="Palacios R."/>
            <person name="Brenner S."/>
            <person name="Gottschalk G."/>
            <person name="Schmitz R.A."/>
            <person name="Broughton W.J."/>
            <person name="Perret X."/>
            <person name="Strittmatter A.W."/>
            <person name="Streit W.R."/>
        </authorList>
    </citation>
    <scope>NUCLEOTIDE SEQUENCE [LARGE SCALE GENOMIC DNA]</scope>
    <source>
        <strain>NBRC 101917 / NGR234</strain>
    </source>
</reference>